<comment type="function">
    <text evidence="1">Binds together with bS18 to 16S ribosomal RNA.</text>
</comment>
<comment type="similarity">
    <text evidence="1">Belongs to the bacterial ribosomal protein bS6 family.</text>
</comment>
<evidence type="ECO:0000255" key="1">
    <source>
        <dbReference type="HAMAP-Rule" id="MF_00360"/>
    </source>
</evidence>
<evidence type="ECO:0000256" key="2">
    <source>
        <dbReference type="SAM" id="MobiDB-lite"/>
    </source>
</evidence>
<evidence type="ECO:0000305" key="3"/>
<accession>A4XPZ7</accession>
<proteinExistence type="inferred from homology"/>
<protein>
    <recommendedName>
        <fullName evidence="1">Small ribosomal subunit protein bS6</fullName>
    </recommendedName>
    <alternativeName>
        <fullName evidence="3">30S ribosomal protein S6</fullName>
    </alternativeName>
</protein>
<feature type="chain" id="PRO_1000005319" description="Small ribosomal subunit protein bS6">
    <location>
        <begin position="1"/>
        <end position="140"/>
    </location>
</feature>
<feature type="region of interest" description="Disordered" evidence="2">
    <location>
        <begin position="96"/>
        <end position="140"/>
    </location>
</feature>
<feature type="compositionally biased region" description="Basic and acidic residues" evidence="2">
    <location>
        <begin position="103"/>
        <end position="121"/>
    </location>
</feature>
<feature type="compositionally biased region" description="Acidic residues" evidence="2">
    <location>
        <begin position="123"/>
        <end position="140"/>
    </location>
</feature>
<name>RS6_ECTM1</name>
<reference key="1">
    <citation type="submission" date="2007-04" db="EMBL/GenBank/DDBJ databases">
        <title>Complete sequence of Pseudomonas mendocina ymp.</title>
        <authorList>
            <consortium name="US DOE Joint Genome Institute"/>
            <person name="Copeland A."/>
            <person name="Lucas S."/>
            <person name="Lapidus A."/>
            <person name="Barry K."/>
            <person name="Glavina del Rio T."/>
            <person name="Dalin E."/>
            <person name="Tice H."/>
            <person name="Pitluck S."/>
            <person name="Kiss H."/>
            <person name="Brettin T."/>
            <person name="Detter J.C."/>
            <person name="Bruce D."/>
            <person name="Han C."/>
            <person name="Schmutz J."/>
            <person name="Larimer F."/>
            <person name="Land M."/>
            <person name="Hauser L."/>
            <person name="Kyrpides N."/>
            <person name="Mikhailova N."/>
            <person name="Hersman L."/>
            <person name="Dubois J."/>
            <person name="Maurice P."/>
            <person name="Richardson P."/>
        </authorList>
    </citation>
    <scope>NUCLEOTIDE SEQUENCE [LARGE SCALE GENOMIC DNA]</scope>
    <source>
        <strain>ymp</strain>
    </source>
</reference>
<organism>
    <name type="scientific">Ectopseudomonas mendocina (strain ymp)</name>
    <name type="common">Pseudomonas mendocina</name>
    <dbReference type="NCBI Taxonomy" id="399739"/>
    <lineage>
        <taxon>Bacteria</taxon>
        <taxon>Pseudomonadati</taxon>
        <taxon>Pseudomonadota</taxon>
        <taxon>Gammaproteobacteria</taxon>
        <taxon>Pseudomonadales</taxon>
        <taxon>Pseudomonadaceae</taxon>
        <taxon>Ectopseudomonas</taxon>
    </lineage>
</organism>
<gene>
    <name evidence="1" type="primary">rpsF</name>
    <name type="ordered locus">Pmen_0645</name>
</gene>
<dbReference type="EMBL" id="CP000680">
    <property type="protein sequence ID" value="ABP83413.1"/>
    <property type="molecule type" value="Genomic_DNA"/>
</dbReference>
<dbReference type="SMR" id="A4XPZ7"/>
<dbReference type="STRING" id="399739.Pmen_0645"/>
<dbReference type="KEGG" id="pmy:Pmen_0645"/>
<dbReference type="eggNOG" id="COG0360">
    <property type="taxonomic scope" value="Bacteria"/>
</dbReference>
<dbReference type="HOGENOM" id="CLU_113441_6_1_6"/>
<dbReference type="OrthoDB" id="9812702at2"/>
<dbReference type="GO" id="GO:0022627">
    <property type="term" value="C:cytosolic small ribosomal subunit"/>
    <property type="evidence" value="ECO:0007669"/>
    <property type="project" value="TreeGrafter"/>
</dbReference>
<dbReference type="GO" id="GO:0070181">
    <property type="term" value="F:small ribosomal subunit rRNA binding"/>
    <property type="evidence" value="ECO:0007669"/>
    <property type="project" value="TreeGrafter"/>
</dbReference>
<dbReference type="GO" id="GO:0003735">
    <property type="term" value="F:structural constituent of ribosome"/>
    <property type="evidence" value="ECO:0007669"/>
    <property type="project" value="InterPro"/>
</dbReference>
<dbReference type="GO" id="GO:0006412">
    <property type="term" value="P:translation"/>
    <property type="evidence" value="ECO:0007669"/>
    <property type="project" value="UniProtKB-UniRule"/>
</dbReference>
<dbReference type="CDD" id="cd00473">
    <property type="entry name" value="bS6"/>
    <property type="match status" value="1"/>
</dbReference>
<dbReference type="FunFam" id="3.30.70.60:FF:000003">
    <property type="entry name" value="30S ribosomal protein S6"/>
    <property type="match status" value="1"/>
</dbReference>
<dbReference type="Gene3D" id="3.30.70.60">
    <property type="match status" value="1"/>
</dbReference>
<dbReference type="HAMAP" id="MF_00360">
    <property type="entry name" value="Ribosomal_bS6"/>
    <property type="match status" value="1"/>
</dbReference>
<dbReference type="InterPro" id="IPR000529">
    <property type="entry name" value="Ribosomal_bS6"/>
</dbReference>
<dbReference type="InterPro" id="IPR020815">
    <property type="entry name" value="Ribosomal_bS6_CS"/>
</dbReference>
<dbReference type="InterPro" id="IPR035980">
    <property type="entry name" value="Ribosomal_bS6_sf"/>
</dbReference>
<dbReference type="InterPro" id="IPR020814">
    <property type="entry name" value="Ribosomal_S6_plastid/chlpt"/>
</dbReference>
<dbReference type="InterPro" id="IPR014717">
    <property type="entry name" value="Transl_elong_EF1B/ribsomal_bS6"/>
</dbReference>
<dbReference type="NCBIfam" id="TIGR00166">
    <property type="entry name" value="S6"/>
    <property type="match status" value="1"/>
</dbReference>
<dbReference type="PANTHER" id="PTHR21011">
    <property type="entry name" value="MITOCHONDRIAL 28S RIBOSOMAL PROTEIN S6"/>
    <property type="match status" value="1"/>
</dbReference>
<dbReference type="PANTHER" id="PTHR21011:SF1">
    <property type="entry name" value="SMALL RIBOSOMAL SUBUNIT PROTEIN BS6M"/>
    <property type="match status" value="1"/>
</dbReference>
<dbReference type="Pfam" id="PF01250">
    <property type="entry name" value="Ribosomal_S6"/>
    <property type="match status" value="1"/>
</dbReference>
<dbReference type="SUPFAM" id="SSF54995">
    <property type="entry name" value="Ribosomal protein S6"/>
    <property type="match status" value="1"/>
</dbReference>
<dbReference type="PROSITE" id="PS01048">
    <property type="entry name" value="RIBOSOMAL_S6"/>
    <property type="match status" value="1"/>
</dbReference>
<sequence>MRHYEIIFLVHPDQSEQVGGMVERYTKLIEEDGGKIHRLEDWGRRQLAYAINNVHKAHYVMLNVECTGKALAELEDNFRYNDAVIRNLVIRRDEAVTGQSEMLKAEENRSERRERRERPENAESNDGDDSDSNDSDNADE</sequence>
<keyword id="KW-0687">Ribonucleoprotein</keyword>
<keyword id="KW-0689">Ribosomal protein</keyword>
<keyword id="KW-0694">RNA-binding</keyword>
<keyword id="KW-0699">rRNA-binding</keyword>